<proteinExistence type="inferred from homology"/>
<feature type="chain" id="PRO_1000130291" description="Ribosomal RNA small subunit methyltransferase A">
    <location>
        <begin position="1"/>
        <end position="276"/>
    </location>
</feature>
<feature type="binding site" evidence="1">
    <location>
        <position position="16"/>
    </location>
    <ligand>
        <name>S-adenosyl-L-methionine</name>
        <dbReference type="ChEBI" id="CHEBI:59789"/>
    </ligand>
</feature>
<feature type="binding site" evidence="1">
    <location>
        <position position="18"/>
    </location>
    <ligand>
        <name>S-adenosyl-L-methionine</name>
        <dbReference type="ChEBI" id="CHEBI:59789"/>
    </ligand>
</feature>
<feature type="binding site" evidence="1">
    <location>
        <position position="43"/>
    </location>
    <ligand>
        <name>S-adenosyl-L-methionine</name>
        <dbReference type="ChEBI" id="CHEBI:59789"/>
    </ligand>
</feature>
<feature type="binding site" evidence="1">
    <location>
        <position position="64"/>
    </location>
    <ligand>
        <name>S-adenosyl-L-methionine</name>
        <dbReference type="ChEBI" id="CHEBI:59789"/>
    </ligand>
</feature>
<feature type="binding site" evidence="1">
    <location>
        <position position="89"/>
    </location>
    <ligand>
        <name>S-adenosyl-L-methionine</name>
        <dbReference type="ChEBI" id="CHEBI:59789"/>
    </ligand>
</feature>
<feature type="binding site" evidence="1">
    <location>
        <position position="109"/>
    </location>
    <ligand>
        <name>S-adenosyl-L-methionine</name>
        <dbReference type="ChEBI" id="CHEBI:59789"/>
    </ligand>
</feature>
<name>RSMA_MARN8</name>
<protein>
    <recommendedName>
        <fullName evidence="1">Ribosomal RNA small subunit methyltransferase A</fullName>
        <ecNumber evidence="1">2.1.1.182</ecNumber>
    </recommendedName>
    <alternativeName>
        <fullName evidence="1">16S rRNA (adenine(1518)-N(6)/adenine(1519)-N(6))-dimethyltransferase</fullName>
    </alternativeName>
    <alternativeName>
        <fullName evidence="1">16S rRNA dimethyladenosine transferase</fullName>
    </alternativeName>
    <alternativeName>
        <fullName evidence="1">16S rRNA dimethylase</fullName>
    </alternativeName>
    <alternativeName>
        <fullName evidence="1">S-adenosylmethionine-6-N', N'-adenosyl(rRNA) dimethyltransferase</fullName>
    </alternativeName>
</protein>
<accession>A1U6F8</accession>
<evidence type="ECO:0000255" key="1">
    <source>
        <dbReference type="HAMAP-Rule" id="MF_00607"/>
    </source>
</evidence>
<comment type="function">
    <text evidence="1">Specifically dimethylates two adjacent adenosines (A1518 and A1519) in the loop of a conserved hairpin near the 3'-end of 16S rRNA in the 30S particle. May play a critical role in biogenesis of 30S subunits.</text>
</comment>
<comment type="catalytic activity">
    <reaction evidence="1">
        <text>adenosine(1518)/adenosine(1519) in 16S rRNA + 4 S-adenosyl-L-methionine = N(6)-dimethyladenosine(1518)/N(6)-dimethyladenosine(1519) in 16S rRNA + 4 S-adenosyl-L-homocysteine + 4 H(+)</text>
        <dbReference type="Rhea" id="RHEA:19609"/>
        <dbReference type="Rhea" id="RHEA-COMP:10232"/>
        <dbReference type="Rhea" id="RHEA-COMP:10233"/>
        <dbReference type="ChEBI" id="CHEBI:15378"/>
        <dbReference type="ChEBI" id="CHEBI:57856"/>
        <dbReference type="ChEBI" id="CHEBI:59789"/>
        <dbReference type="ChEBI" id="CHEBI:74411"/>
        <dbReference type="ChEBI" id="CHEBI:74493"/>
        <dbReference type="EC" id="2.1.1.182"/>
    </reaction>
</comment>
<comment type="subcellular location">
    <subcellularLocation>
        <location evidence="1">Cytoplasm</location>
    </subcellularLocation>
</comment>
<comment type="similarity">
    <text evidence="1">Belongs to the class I-like SAM-binding methyltransferase superfamily. rRNA adenine N(6)-methyltransferase family. RsmA subfamily.</text>
</comment>
<gene>
    <name evidence="1" type="primary">rsmA</name>
    <name evidence="1" type="synonym">ksgA</name>
    <name type="ordered locus">Maqu_3507</name>
</gene>
<reference key="1">
    <citation type="journal article" date="2011" name="Appl. Environ. Microbiol.">
        <title>Genomic potential of Marinobacter aquaeolei, a biogeochemical 'opportunitroph'.</title>
        <authorList>
            <person name="Singer E."/>
            <person name="Webb E.A."/>
            <person name="Nelson W.C."/>
            <person name="Heidelberg J.F."/>
            <person name="Ivanova N."/>
            <person name="Pati A."/>
            <person name="Edwards K.J."/>
        </authorList>
    </citation>
    <scope>NUCLEOTIDE SEQUENCE [LARGE SCALE GENOMIC DNA]</scope>
    <source>
        <strain>ATCC 700491 / DSM 11845 / VT8</strain>
    </source>
</reference>
<dbReference type="EC" id="2.1.1.182" evidence="1"/>
<dbReference type="EMBL" id="CP000514">
    <property type="protein sequence ID" value="ABM20577.1"/>
    <property type="molecule type" value="Genomic_DNA"/>
</dbReference>
<dbReference type="RefSeq" id="WP_011786918.1">
    <property type="nucleotide sequence ID" value="NC_008740.1"/>
</dbReference>
<dbReference type="SMR" id="A1U6F8"/>
<dbReference type="STRING" id="351348.Maqu_3507"/>
<dbReference type="GeneID" id="31822752"/>
<dbReference type="KEGG" id="maq:Maqu_3507"/>
<dbReference type="eggNOG" id="COG0030">
    <property type="taxonomic scope" value="Bacteria"/>
</dbReference>
<dbReference type="HOGENOM" id="CLU_041220_0_1_6"/>
<dbReference type="OrthoDB" id="9814755at2"/>
<dbReference type="Proteomes" id="UP000000998">
    <property type="component" value="Chromosome"/>
</dbReference>
<dbReference type="GO" id="GO:0005829">
    <property type="term" value="C:cytosol"/>
    <property type="evidence" value="ECO:0007669"/>
    <property type="project" value="TreeGrafter"/>
</dbReference>
<dbReference type="GO" id="GO:0052908">
    <property type="term" value="F:16S rRNA (adenine(1518)-N(6)/adenine(1519)-N(6))-dimethyltransferase activity"/>
    <property type="evidence" value="ECO:0007669"/>
    <property type="project" value="UniProtKB-EC"/>
</dbReference>
<dbReference type="GO" id="GO:0003723">
    <property type="term" value="F:RNA binding"/>
    <property type="evidence" value="ECO:0007669"/>
    <property type="project" value="UniProtKB-KW"/>
</dbReference>
<dbReference type="FunFam" id="1.10.8.100:FF:000001">
    <property type="entry name" value="Ribosomal RNA small subunit methyltransferase A"/>
    <property type="match status" value="1"/>
</dbReference>
<dbReference type="Gene3D" id="1.10.8.100">
    <property type="entry name" value="Ribosomal RNA adenine dimethylase-like, domain 2"/>
    <property type="match status" value="1"/>
</dbReference>
<dbReference type="Gene3D" id="3.40.50.150">
    <property type="entry name" value="Vaccinia Virus protein VP39"/>
    <property type="match status" value="1"/>
</dbReference>
<dbReference type="HAMAP" id="MF_00607">
    <property type="entry name" value="16SrRNA_methyltr_A"/>
    <property type="match status" value="1"/>
</dbReference>
<dbReference type="InterPro" id="IPR001737">
    <property type="entry name" value="KsgA/Erm"/>
</dbReference>
<dbReference type="InterPro" id="IPR023165">
    <property type="entry name" value="rRNA_Ade_diMease-like_C"/>
</dbReference>
<dbReference type="InterPro" id="IPR020596">
    <property type="entry name" value="rRNA_Ade_Mease_Trfase_CS"/>
</dbReference>
<dbReference type="InterPro" id="IPR020598">
    <property type="entry name" value="rRNA_Ade_methylase_Trfase_N"/>
</dbReference>
<dbReference type="InterPro" id="IPR011530">
    <property type="entry name" value="rRNA_adenine_dimethylase"/>
</dbReference>
<dbReference type="InterPro" id="IPR029063">
    <property type="entry name" value="SAM-dependent_MTases_sf"/>
</dbReference>
<dbReference type="NCBIfam" id="TIGR00755">
    <property type="entry name" value="ksgA"/>
    <property type="match status" value="1"/>
</dbReference>
<dbReference type="PANTHER" id="PTHR11727">
    <property type="entry name" value="DIMETHYLADENOSINE TRANSFERASE"/>
    <property type="match status" value="1"/>
</dbReference>
<dbReference type="PANTHER" id="PTHR11727:SF7">
    <property type="entry name" value="DIMETHYLADENOSINE TRANSFERASE-RELATED"/>
    <property type="match status" value="1"/>
</dbReference>
<dbReference type="Pfam" id="PF00398">
    <property type="entry name" value="RrnaAD"/>
    <property type="match status" value="1"/>
</dbReference>
<dbReference type="SMART" id="SM00650">
    <property type="entry name" value="rADc"/>
    <property type="match status" value="1"/>
</dbReference>
<dbReference type="SUPFAM" id="SSF53335">
    <property type="entry name" value="S-adenosyl-L-methionine-dependent methyltransferases"/>
    <property type="match status" value="1"/>
</dbReference>
<dbReference type="PROSITE" id="PS01131">
    <property type="entry name" value="RRNA_A_DIMETH"/>
    <property type="match status" value="1"/>
</dbReference>
<dbReference type="PROSITE" id="PS51689">
    <property type="entry name" value="SAM_RNA_A_N6_MT"/>
    <property type="match status" value="1"/>
</dbReference>
<sequence>MSNKHGHQARKRFGQNFLHDPGVIERIVRAINPKPEDSIVEIGPGLGAITEEILAINPRLQVVELDRDLIPVLRTKFFNYPEFRIHEADALSFDFSQLVSDRPLRIVGNLPYNISTPLIFHLLSQSGVVQDMHFMLQKEVVQRLAAVPGDNNYGRLGIMAQYFCKVQPLFEVGPGAFRPAPKVDSAIVRLVPHKELPYPAKDLKTLQAVVRTAFNARRKTLRKALAAMVTVEQLQSLGINDGLRPENLGLADYVRIADLLADTGKLQADDNEVSDD</sequence>
<organism>
    <name type="scientific">Marinobacter nauticus (strain ATCC 700491 / DSM 11845 / VT8)</name>
    <name type="common">Marinobacter aquaeolei</name>
    <dbReference type="NCBI Taxonomy" id="351348"/>
    <lineage>
        <taxon>Bacteria</taxon>
        <taxon>Pseudomonadati</taxon>
        <taxon>Pseudomonadota</taxon>
        <taxon>Gammaproteobacteria</taxon>
        <taxon>Pseudomonadales</taxon>
        <taxon>Marinobacteraceae</taxon>
        <taxon>Marinobacter</taxon>
    </lineage>
</organism>
<keyword id="KW-0963">Cytoplasm</keyword>
<keyword id="KW-0489">Methyltransferase</keyword>
<keyword id="KW-0694">RNA-binding</keyword>
<keyword id="KW-0698">rRNA processing</keyword>
<keyword id="KW-0949">S-adenosyl-L-methionine</keyword>
<keyword id="KW-0808">Transferase</keyword>